<proteinExistence type="inferred from homology"/>
<organism>
    <name type="scientific">Shewanella woodyi (strain ATCC 51908 / MS32)</name>
    <dbReference type="NCBI Taxonomy" id="392500"/>
    <lineage>
        <taxon>Bacteria</taxon>
        <taxon>Pseudomonadati</taxon>
        <taxon>Pseudomonadota</taxon>
        <taxon>Gammaproteobacteria</taxon>
        <taxon>Alteromonadales</taxon>
        <taxon>Shewanellaceae</taxon>
        <taxon>Shewanella</taxon>
    </lineage>
</organism>
<sequence>MKNILRKIIHIDMDCYFAAVEMRDFPELRGKPIAVGGRSDRRGVISTCNYEARAFGVRSAMASGYALKLCPDLILVPGRMSVYKEVSAQIRDIFARYTDLIEPLSLDEAYLDVTECKQCQGSATLIAQAIRQEIFEVTGLTASAGIAPVKFLAKVASDLNKPNGQYVITPDMISSFITTLPLTKIPGVGKVTGKKLEDIGLTTCGELQAYPKSELIERFGKFGKILIERAQGIDERAISPHRERKSVGVETTLAKDIYTLEQCHGVMPQLIQELGARMSRSAKGRSINKQVVKLKFNDFKQTTIEHRSDEMSVKLFYELLAQSLERQQGRGIRLLGVSVGLACQADSNTAKDNQVRESQLDLGF</sequence>
<comment type="function">
    <text evidence="1">Poorly processive, error-prone DNA polymerase involved in untargeted mutagenesis. Copies undamaged DNA at stalled replication forks, which arise in vivo from mismatched or misaligned primer ends. These misaligned primers can be extended by PolIV. Exhibits no 3'-5' exonuclease (proofreading) activity. May be involved in translesional synthesis, in conjunction with the beta clamp from PolIII.</text>
</comment>
<comment type="catalytic activity">
    <reaction evidence="1">
        <text>DNA(n) + a 2'-deoxyribonucleoside 5'-triphosphate = DNA(n+1) + diphosphate</text>
        <dbReference type="Rhea" id="RHEA:22508"/>
        <dbReference type="Rhea" id="RHEA-COMP:17339"/>
        <dbReference type="Rhea" id="RHEA-COMP:17340"/>
        <dbReference type="ChEBI" id="CHEBI:33019"/>
        <dbReference type="ChEBI" id="CHEBI:61560"/>
        <dbReference type="ChEBI" id="CHEBI:173112"/>
        <dbReference type="EC" id="2.7.7.7"/>
    </reaction>
</comment>
<comment type="cofactor">
    <cofactor evidence="1">
        <name>Mg(2+)</name>
        <dbReference type="ChEBI" id="CHEBI:18420"/>
    </cofactor>
    <text evidence="1">Binds 2 magnesium ions per subunit.</text>
</comment>
<comment type="subunit">
    <text evidence="1">Monomer.</text>
</comment>
<comment type="subcellular location">
    <subcellularLocation>
        <location evidence="1">Cytoplasm</location>
    </subcellularLocation>
</comment>
<comment type="similarity">
    <text evidence="1">Belongs to the DNA polymerase type-Y family.</text>
</comment>
<accession>B1KD33</accession>
<dbReference type="EC" id="2.7.7.7" evidence="1"/>
<dbReference type="EMBL" id="CP000961">
    <property type="protein sequence ID" value="ACA87868.1"/>
    <property type="molecule type" value="Genomic_DNA"/>
</dbReference>
<dbReference type="SMR" id="B1KD33"/>
<dbReference type="STRING" id="392500.Swoo_3604"/>
<dbReference type="KEGG" id="swd:Swoo_3604"/>
<dbReference type="eggNOG" id="COG0389">
    <property type="taxonomic scope" value="Bacteria"/>
</dbReference>
<dbReference type="HOGENOM" id="CLU_012348_1_2_6"/>
<dbReference type="Proteomes" id="UP000002168">
    <property type="component" value="Chromosome"/>
</dbReference>
<dbReference type="GO" id="GO:0005829">
    <property type="term" value="C:cytosol"/>
    <property type="evidence" value="ECO:0007669"/>
    <property type="project" value="TreeGrafter"/>
</dbReference>
<dbReference type="GO" id="GO:0003684">
    <property type="term" value="F:damaged DNA binding"/>
    <property type="evidence" value="ECO:0007669"/>
    <property type="project" value="InterPro"/>
</dbReference>
<dbReference type="GO" id="GO:0003887">
    <property type="term" value="F:DNA-directed DNA polymerase activity"/>
    <property type="evidence" value="ECO:0007669"/>
    <property type="project" value="UniProtKB-UniRule"/>
</dbReference>
<dbReference type="GO" id="GO:0000287">
    <property type="term" value="F:magnesium ion binding"/>
    <property type="evidence" value="ECO:0007669"/>
    <property type="project" value="UniProtKB-UniRule"/>
</dbReference>
<dbReference type="GO" id="GO:0006261">
    <property type="term" value="P:DNA-templated DNA replication"/>
    <property type="evidence" value="ECO:0007669"/>
    <property type="project" value="UniProtKB-UniRule"/>
</dbReference>
<dbReference type="GO" id="GO:0042276">
    <property type="term" value="P:error-prone translesion synthesis"/>
    <property type="evidence" value="ECO:0007669"/>
    <property type="project" value="TreeGrafter"/>
</dbReference>
<dbReference type="GO" id="GO:0009432">
    <property type="term" value="P:SOS response"/>
    <property type="evidence" value="ECO:0007669"/>
    <property type="project" value="TreeGrafter"/>
</dbReference>
<dbReference type="CDD" id="cd03586">
    <property type="entry name" value="PolY_Pol_IV_kappa"/>
    <property type="match status" value="1"/>
</dbReference>
<dbReference type="FunFam" id="1.10.150.20:FF:000019">
    <property type="entry name" value="DNA polymerase IV"/>
    <property type="match status" value="1"/>
</dbReference>
<dbReference type="FunFam" id="3.30.70.270:FF:000002">
    <property type="entry name" value="DNA polymerase IV"/>
    <property type="match status" value="1"/>
</dbReference>
<dbReference type="FunFam" id="3.40.1170.60:FF:000001">
    <property type="entry name" value="DNA polymerase IV"/>
    <property type="match status" value="1"/>
</dbReference>
<dbReference type="Gene3D" id="3.30.70.270">
    <property type="match status" value="1"/>
</dbReference>
<dbReference type="Gene3D" id="3.40.1170.60">
    <property type="match status" value="1"/>
</dbReference>
<dbReference type="Gene3D" id="1.10.150.20">
    <property type="entry name" value="5' to 3' exonuclease, C-terminal subdomain"/>
    <property type="match status" value="1"/>
</dbReference>
<dbReference type="Gene3D" id="3.30.1490.100">
    <property type="entry name" value="DNA polymerase, Y-family, little finger domain"/>
    <property type="match status" value="1"/>
</dbReference>
<dbReference type="HAMAP" id="MF_01113">
    <property type="entry name" value="DNApol_IV"/>
    <property type="match status" value="1"/>
</dbReference>
<dbReference type="InterPro" id="IPR043502">
    <property type="entry name" value="DNA/RNA_pol_sf"/>
</dbReference>
<dbReference type="InterPro" id="IPR036775">
    <property type="entry name" value="DNA_pol_Y-fam_lit_finger_sf"/>
</dbReference>
<dbReference type="InterPro" id="IPR017961">
    <property type="entry name" value="DNA_pol_Y-fam_little_finger"/>
</dbReference>
<dbReference type="InterPro" id="IPR050116">
    <property type="entry name" value="DNA_polymerase-Y"/>
</dbReference>
<dbReference type="InterPro" id="IPR022880">
    <property type="entry name" value="DNApol_IV"/>
</dbReference>
<dbReference type="InterPro" id="IPR053848">
    <property type="entry name" value="IMS_HHH_1"/>
</dbReference>
<dbReference type="InterPro" id="IPR043128">
    <property type="entry name" value="Rev_trsase/Diguanyl_cyclase"/>
</dbReference>
<dbReference type="InterPro" id="IPR001126">
    <property type="entry name" value="UmuC"/>
</dbReference>
<dbReference type="NCBIfam" id="NF002677">
    <property type="entry name" value="PRK02406.1"/>
    <property type="match status" value="1"/>
</dbReference>
<dbReference type="PANTHER" id="PTHR11076:SF33">
    <property type="entry name" value="DNA POLYMERASE KAPPA"/>
    <property type="match status" value="1"/>
</dbReference>
<dbReference type="PANTHER" id="PTHR11076">
    <property type="entry name" value="DNA REPAIR POLYMERASE UMUC / TRANSFERASE FAMILY MEMBER"/>
    <property type="match status" value="1"/>
</dbReference>
<dbReference type="Pfam" id="PF00817">
    <property type="entry name" value="IMS"/>
    <property type="match status" value="1"/>
</dbReference>
<dbReference type="Pfam" id="PF11799">
    <property type="entry name" value="IMS_C"/>
    <property type="match status" value="1"/>
</dbReference>
<dbReference type="Pfam" id="PF21999">
    <property type="entry name" value="IMS_HHH_1"/>
    <property type="match status" value="1"/>
</dbReference>
<dbReference type="SUPFAM" id="SSF56672">
    <property type="entry name" value="DNA/RNA polymerases"/>
    <property type="match status" value="1"/>
</dbReference>
<dbReference type="SUPFAM" id="SSF100879">
    <property type="entry name" value="Lesion bypass DNA polymerase (Y-family), little finger domain"/>
    <property type="match status" value="1"/>
</dbReference>
<dbReference type="PROSITE" id="PS50173">
    <property type="entry name" value="UMUC"/>
    <property type="match status" value="1"/>
</dbReference>
<protein>
    <recommendedName>
        <fullName evidence="1">DNA polymerase IV</fullName>
        <shortName evidence="1">Pol IV</shortName>
        <ecNumber evidence="1">2.7.7.7</ecNumber>
    </recommendedName>
</protein>
<name>DPO4_SHEWM</name>
<evidence type="ECO:0000255" key="1">
    <source>
        <dbReference type="HAMAP-Rule" id="MF_01113"/>
    </source>
</evidence>
<reference key="1">
    <citation type="submission" date="2008-02" db="EMBL/GenBank/DDBJ databases">
        <title>Complete sequence of Shewanella woodyi ATCC 51908.</title>
        <authorList>
            <consortium name="US DOE Joint Genome Institute"/>
            <person name="Copeland A."/>
            <person name="Lucas S."/>
            <person name="Lapidus A."/>
            <person name="Glavina del Rio T."/>
            <person name="Dalin E."/>
            <person name="Tice H."/>
            <person name="Bruce D."/>
            <person name="Goodwin L."/>
            <person name="Pitluck S."/>
            <person name="Sims D."/>
            <person name="Brettin T."/>
            <person name="Detter J.C."/>
            <person name="Han C."/>
            <person name="Kuske C.R."/>
            <person name="Schmutz J."/>
            <person name="Larimer F."/>
            <person name="Land M."/>
            <person name="Hauser L."/>
            <person name="Kyrpides N."/>
            <person name="Lykidis A."/>
            <person name="Zhao J.-S."/>
            <person name="Richardson P."/>
        </authorList>
    </citation>
    <scope>NUCLEOTIDE SEQUENCE [LARGE SCALE GENOMIC DNA]</scope>
    <source>
        <strain>ATCC 51908 / MS32</strain>
    </source>
</reference>
<keyword id="KW-0963">Cytoplasm</keyword>
<keyword id="KW-0227">DNA damage</keyword>
<keyword id="KW-0234">DNA repair</keyword>
<keyword id="KW-0235">DNA replication</keyword>
<keyword id="KW-0238">DNA-binding</keyword>
<keyword id="KW-0239">DNA-directed DNA polymerase</keyword>
<keyword id="KW-0460">Magnesium</keyword>
<keyword id="KW-0479">Metal-binding</keyword>
<keyword id="KW-0515">Mutator protein</keyword>
<keyword id="KW-0548">Nucleotidyltransferase</keyword>
<keyword id="KW-1185">Reference proteome</keyword>
<keyword id="KW-0808">Transferase</keyword>
<gene>
    <name evidence="1" type="primary">dinB</name>
    <name type="ordered locus">Swoo_3604</name>
</gene>
<feature type="chain" id="PRO_1000164005" description="DNA polymerase IV">
    <location>
        <begin position="1"/>
        <end position="364"/>
    </location>
</feature>
<feature type="domain" description="UmuC" evidence="1">
    <location>
        <begin position="8"/>
        <end position="189"/>
    </location>
</feature>
<feature type="active site" evidence="1">
    <location>
        <position position="108"/>
    </location>
</feature>
<feature type="binding site" evidence="1">
    <location>
        <position position="12"/>
    </location>
    <ligand>
        <name>Mg(2+)</name>
        <dbReference type="ChEBI" id="CHEBI:18420"/>
    </ligand>
</feature>
<feature type="binding site" evidence="1">
    <location>
        <position position="107"/>
    </location>
    <ligand>
        <name>Mg(2+)</name>
        <dbReference type="ChEBI" id="CHEBI:18420"/>
    </ligand>
</feature>
<feature type="site" description="Substrate discrimination" evidence="1">
    <location>
        <position position="17"/>
    </location>
</feature>